<feature type="transit peptide" description="Mitochondrion" evidence="2">
    <location>
        <begin position="1"/>
        <end position="56"/>
    </location>
</feature>
<feature type="chain" id="PRO_0000341403" description="Threonylcarbamoyl-AMP synthase">
    <location>
        <begin position="57"/>
        <end position="280"/>
    </location>
</feature>
<feature type="domain" description="YrdC-like" evidence="3">
    <location>
        <begin position="68"/>
        <end position="258"/>
    </location>
</feature>
<feature type="modified residue" description="Phosphoserine" evidence="1">
    <location>
        <position position="61"/>
    </location>
</feature>
<feature type="sequence conflict" description="In Ref. 3; AAP37032." evidence="6" ref="3">
    <original>R</original>
    <variation>L</variation>
    <location>
        <position position="35"/>
    </location>
</feature>
<feature type="sequence conflict" description="In Ref. 3; AAP37032 and 4; AAH23823." evidence="6" ref="3 4">
    <original>S</original>
    <variation>A</variation>
    <location>
        <position position="65"/>
    </location>
</feature>
<organism>
    <name type="scientific">Mus musculus</name>
    <name type="common">Mouse</name>
    <dbReference type="NCBI Taxonomy" id="10090"/>
    <lineage>
        <taxon>Eukaryota</taxon>
        <taxon>Metazoa</taxon>
        <taxon>Chordata</taxon>
        <taxon>Craniata</taxon>
        <taxon>Vertebrata</taxon>
        <taxon>Euteleostomi</taxon>
        <taxon>Mammalia</taxon>
        <taxon>Eutheria</taxon>
        <taxon>Euarchontoglires</taxon>
        <taxon>Glires</taxon>
        <taxon>Rodentia</taxon>
        <taxon>Myomorpha</taxon>
        <taxon>Muroidea</taxon>
        <taxon>Muridae</taxon>
        <taxon>Murinae</taxon>
        <taxon>Mus</taxon>
        <taxon>Mus</taxon>
    </lineage>
</organism>
<sequence>MSTARPCAGLRAAVAAGMGLSDGPASSGRGCRLLRPPEPAPALPGARLLRLPESEPVEAASPERSGWTEALRAAVAELRAGAVVAVPTDTLYGLACSASSSAALSCVYRLKGRSEAKPLAVCLGRVADVYRYCQVRVPRELLEDLFPGPVTLVMERSEELNKDLNPFTRLVGIRIPDHAFMLDLAQMFGGPLALTSANLSSQASSLSVEEFQDLWPHLSLVIDGGPIGDSQSPECRLGSTVVDLSVPGKFGIIRPGCALENTTSILQQKYGLLPSQGSCS</sequence>
<dbReference type="EC" id="2.7.7.87" evidence="1"/>
<dbReference type="EMBL" id="AK153627">
    <property type="protein sequence ID" value="BAE32125.1"/>
    <property type="molecule type" value="mRNA"/>
</dbReference>
<dbReference type="EMBL" id="AL606933">
    <property type="protein sequence ID" value="CAM16101.1"/>
    <property type="status" value="ALT_INIT"/>
    <property type="molecule type" value="Genomic_DNA"/>
</dbReference>
<dbReference type="EMBL" id="AL606933">
    <property type="protein sequence ID" value="CAP19076.1"/>
    <property type="status" value="ALT_SEQ"/>
    <property type="molecule type" value="Genomic_DNA"/>
</dbReference>
<dbReference type="EMBL" id="AY283537">
    <property type="protein sequence ID" value="AAP37032.1"/>
    <property type="status" value="ALT_INIT"/>
    <property type="molecule type" value="mRNA"/>
</dbReference>
<dbReference type="EMBL" id="BC023823">
    <property type="protein sequence ID" value="AAH23823.1"/>
    <property type="status" value="ALT_INIT"/>
    <property type="molecule type" value="mRNA"/>
</dbReference>
<dbReference type="CCDS" id="CCDS18628.2"/>
<dbReference type="RefSeq" id="NP_705794.2">
    <property type="nucleotide sequence ID" value="NM_153566.2"/>
</dbReference>
<dbReference type="SMR" id="Q3U5F4"/>
<dbReference type="BioGRID" id="231008">
    <property type="interactions" value="1"/>
</dbReference>
<dbReference type="FunCoup" id="Q3U5F4">
    <property type="interactions" value="1218"/>
</dbReference>
<dbReference type="STRING" id="10090.ENSMUSP00000099688"/>
<dbReference type="GlyGen" id="Q3U5F4">
    <property type="glycosylation" value="1 site, 1 O-linked glycan (1 site)"/>
</dbReference>
<dbReference type="iPTMnet" id="Q3U5F4"/>
<dbReference type="PhosphoSitePlus" id="Q3U5F4"/>
<dbReference type="SwissPalm" id="Q3U5F4"/>
<dbReference type="PaxDb" id="10090-ENSMUSP00000099688"/>
<dbReference type="PeptideAtlas" id="Q3U5F4"/>
<dbReference type="ProteomicsDB" id="275230"/>
<dbReference type="Pumba" id="Q3U5F4"/>
<dbReference type="Antibodypedia" id="31792">
    <property type="antibodies" value="28 antibodies from 13 providers"/>
</dbReference>
<dbReference type="Ensembl" id="ENSMUST00000102628.11">
    <property type="protein sequence ID" value="ENSMUSP00000099688.5"/>
    <property type="gene ID" value="ENSMUSG00000028889.18"/>
</dbReference>
<dbReference type="GeneID" id="230734"/>
<dbReference type="KEGG" id="mmu:230734"/>
<dbReference type="UCSC" id="uc008urf.2">
    <property type="organism name" value="mouse"/>
</dbReference>
<dbReference type="AGR" id="MGI:2387201"/>
<dbReference type="CTD" id="79693"/>
<dbReference type="MGI" id="MGI:2387201">
    <property type="gene designation" value="Yrdc"/>
</dbReference>
<dbReference type="VEuPathDB" id="HostDB:ENSMUSG00000028889"/>
<dbReference type="eggNOG" id="KOG3051">
    <property type="taxonomic scope" value="Eukaryota"/>
</dbReference>
<dbReference type="GeneTree" id="ENSGT00390000015364"/>
<dbReference type="HOGENOM" id="CLU_031397_5_1_1"/>
<dbReference type="InParanoid" id="Q3U5F4"/>
<dbReference type="OMA" id="RDLCAVW"/>
<dbReference type="OrthoDB" id="3648309at2759"/>
<dbReference type="PhylomeDB" id="Q3U5F4"/>
<dbReference type="TreeFam" id="TF314358"/>
<dbReference type="BioGRID-ORCS" id="230734">
    <property type="hits" value="27 hits in 77 CRISPR screens"/>
</dbReference>
<dbReference type="ChiTaRS" id="Yrdc">
    <property type="organism name" value="mouse"/>
</dbReference>
<dbReference type="PRO" id="PR:Q3U5F4"/>
<dbReference type="Proteomes" id="UP000000589">
    <property type="component" value="Chromosome 4"/>
</dbReference>
<dbReference type="RNAct" id="Q3U5F4">
    <property type="molecule type" value="protein"/>
</dbReference>
<dbReference type="Bgee" id="ENSMUSG00000028889">
    <property type="expression patterns" value="Expressed in ectoplacental cone and 65 other cell types or tissues"/>
</dbReference>
<dbReference type="ExpressionAtlas" id="Q3U5F4">
    <property type="expression patterns" value="baseline and differential"/>
</dbReference>
<dbReference type="GO" id="GO:0005737">
    <property type="term" value="C:cytoplasm"/>
    <property type="evidence" value="ECO:0000250"/>
    <property type="project" value="UniProtKB"/>
</dbReference>
<dbReference type="GO" id="GO:0016020">
    <property type="term" value="C:membrane"/>
    <property type="evidence" value="ECO:0000314"/>
    <property type="project" value="MGI"/>
</dbReference>
<dbReference type="GO" id="GO:0005739">
    <property type="term" value="C:mitochondrion"/>
    <property type="evidence" value="ECO:0000250"/>
    <property type="project" value="UniProtKB"/>
</dbReference>
<dbReference type="GO" id="GO:0005886">
    <property type="term" value="C:plasma membrane"/>
    <property type="evidence" value="ECO:0007669"/>
    <property type="project" value="UniProtKB-SubCell"/>
</dbReference>
<dbReference type="GO" id="GO:0003725">
    <property type="term" value="F:double-stranded RNA binding"/>
    <property type="evidence" value="ECO:0007669"/>
    <property type="project" value="InterPro"/>
</dbReference>
<dbReference type="GO" id="GO:0061710">
    <property type="term" value="F:L-threonylcarbamoyladenylate synthase"/>
    <property type="evidence" value="ECO:0000250"/>
    <property type="project" value="UniProtKB"/>
</dbReference>
<dbReference type="GO" id="GO:0051051">
    <property type="term" value="P:negative regulation of transport"/>
    <property type="evidence" value="ECO:0000266"/>
    <property type="project" value="MGI"/>
</dbReference>
<dbReference type="GO" id="GO:0002949">
    <property type="term" value="P:tRNA threonylcarbamoyladenosine modification"/>
    <property type="evidence" value="ECO:0000250"/>
    <property type="project" value="UniProtKB"/>
</dbReference>
<dbReference type="FunFam" id="3.90.870.10:FF:000007">
    <property type="entry name" value="YrdC N6-threonylcarbamoyltransferase domain containing"/>
    <property type="match status" value="1"/>
</dbReference>
<dbReference type="Gene3D" id="3.90.870.10">
    <property type="entry name" value="DHBP synthase"/>
    <property type="match status" value="1"/>
</dbReference>
<dbReference type="InterPro" id="IPR017945">
    <property type="entry name" value="DHBP_synth_RibB-like_a/b_dom"/>
</dbReference>
<dbReference type="InterPro" id="IPR006070">
    <property type="entry name" value="Sua5-like_dom"/>
</dbReference>
<dbReference type="InterPro" id="IPR050156">
    <property type="entry name" value="TC-AMP_synthase_SUA5"/>
</dbReference>
<dbReference type="NCBIfam" id="TIGR00057">
    <property type="entry name" value="L-threonylcarbamoyladenylate synthase"/>
    <property type="match status" value="1"/>
</dbReference>
<dbReference type="PANTHER" id="PTHR17490">
    <property type="entry name" value="SUA5"/>
    <property type="match status" value="1"/>
</dbReference>
<dbReference type="PANTHER" id="PTHR17490:SF10">
    <property type="entry name" value="THREONYLCARBAMOYL-AMP SYNTHASE"/>
    <property type="match status" value="1"/>
</dbReference>
<dbReference type="Pfam" id="PF01300">
    <property type="entry name" value="Sua5_yciO_yrdC"/>
    <property type="match status" value="1"/>
</dbReference>
<dbReference type="SUPFAM" id="SSF55821">
    <property type="entry name" value="YrdC/RibB"/>
    <property type="match status" value="1"/>
</dbReference>
<dbReference type="PROSITE" id="PS51163">
    <property type="entry name" value="YRDC"/>
    <property type="match status" value="1"/>
</dbReference>
<keyword id="KW-1003">Cell membrane</keyword>
<keyword id="KW-0963">Cytoplasm</keyword>
<keyword id="KW-0472">Membrane</keyword>
<keyword id="KW-0496">Mitochondrion</keyword>
<keyword id="KW-0597">Phosphoprotein</keyword>
<keyword id="KW-1185">Reference proteome</keyword>
<keyword id="KW-0808">Transferase</keyword>
<keyword id="KW-0809">Transit peptide</keyword>
<proteinExistence type="evidence at protein level"/>
<protein>
    <recommendedName>
        <fullName evidence="6">Threonylcarbamoyl-AMP synthase</fullName>
        <ecNumber evidence="1">2.7.7.87</ecNumber>
    </recommendedName>
    <alternativeName>
        <fullName evidence="5">Ischemia/reperfusion-inducible protein</fullName>
        <shortName evidence="5">mIRIP</shortName>
    </alternativeName>
</protein>
<name>YRDC_MOUSE</name>
<comment type="function">
    <text evidence="1 4">Cytoplasmic and mitochondrial threonylcarbamoyl-AMP synthase required for the formation of a threonylcarbamoyl group on adenosine at position 37 (t(6)A37) in tRNAs that read codons beginning with adenine. Catalyzes the conversion of L-threonine, HCO(3)(-)/CO(2) and ATP to give threonylcarbamoyl-AMP (TC-AMP) as the acyladenylate intermediate, with the release of diphosphate. Participates in t(6)A37 formation in cytoplasmic and mitochondrial tRNAs (By similarity). May regulate the activity of some transporters (PubMed:16024787).</text>
</comment>
<comment type="catalytic activity">
    <reaction evidence="1">
        <text>L-threonine + hydrogencarbonate + ATP = L-threonylcarbamoyladenylate + diphosphate + H2O</text>
        <dbReference type="Rhea" id="RHEA:36407"/>
        <dbReference type="ChEBI" id="CHEBI:15377"/>
        <dbReference type="ChEBI" id="CHEBI:17544"/>
        <dbReference type="ChEBI" id="CHEBI:30616"/>
        <dbReference type="ChEBI" id="CHEBI:33019"/>
        <dbReference type="ChEBI" id="CHEBI:57926"/>
        <dbReference type="ChEBI" id="CHEBI:73682"/>
        <dbReference type="EC" id="2.7.7.87"/>
    </reaction>
</comment>
<comment type="subunit">
    <text evidence="4">Interacts with RSC1A1.</text>
</comment>
<comment type="subcellular location">
    <subcellularLocation>
        <location evidence="1">Cytoplasm</location>
    </subcellularLocation>
    <subcellularLocation>
        <location evidence="1">Mitochondrion</location>
    </subcellularLocation>
    <subcellularLocation>
        <location evidence="4">Cell membrane</location>
        <topology evidence="4">Peripheral membrane protein</topology>
    </subcellularLocation>
    <text evidence="1">A large fraction localizes in the cytoplasm, whereas a smaller fraction is imported to mitochondria.</text>
</comment>
<comment type="tissue specificity">
    <text evidence="4">Widely expressed. Expressed at higher level in testis, secretory, and endocrine organs.</text>
</comment>
<comment type="induction">
    <text evidence="4">By ischemia/reperfusion and endotoxemia.</text>
</comment>
<comment type="domain">
    <text evidence="1">The mitochondrial targeting sequence (MTS) is weak and only mediates import of a small fraction of YRDC in mitochondria.</text>
</comment>
<comment type="similarity">
    <text evidence="6">Belongs to the SUA5 family.</text>
</comment>
<comment type="sequence caution" evidence="6">
    <conflict type="erroneous initiation">
        <sequence resource="EMBL-CDS" id="AAH23823"/>
    </conflict>
</comment>
<comment type="sequence caution" evidence="6">
    <conflict type="erroneous initiation">
        <sequence resource="EMBL-CDS" id="AAP37032"/>
    </conflict>
</comment>
<comment type="sequence caution" evidence="6">
    <conflict type="erroneous initiation">
        <sequence resource="EMBL-CDS" id="CAM16101"/>
    </conflict>
</comment>
<comment type="sequence caution" evidence="6">
    <conflict type="erroneous gene model prediction">
        <sequence resource="EMBL-CDS" id="CAP19076"/>
    </conflict>
</comment>
<gene>
    <name type="primary">Yrdc</name>
    <name evidence="5" type="synonym">Irip</name>
</gene>
<evidence type="ECO:0000250" key="1">
    <source>
        <dbReference type="UniProtKB" id="Q86U90"/>
    </source>
</evidence>
<evidence type="ECO:0000255" key="2"/>
<evidence type="ECO:0000255" key="3">
    <source>
        <dbReference type="PROSITE-ProRule" id="PRU00518"/>
    </source>
</evidence>
<evidence type="ECO:0000269" key="4">
    <source>
    </source>
</evidence>
<evidence type="ECO:0000303" key="5">
    <source>
    </source>
</evidence>
<evidence type="ECO:0000305" key="6"/>
<reference key="1">
    <citation type="journal article" date="2005" name="Science">
        <title>The transcriptional landscape of the mammalian genome.</title>
        <authorList>
            <person name="Carninci P."/>
            <person name="Kasukawa T."/>
            <person name="Katayama S."/>
            <person name="Gough J."/>
            <person name="Frith M.C."/>
            <person name="Maeda N."/>
            <person name="Oyama R."/>
            <person name="Ravasi T."/>
            <person name="Lenhard B."/>
            <person name="Wells C."/>
            <person name="Kodzius R."/>
            <person name="Shimokawa K."/>
            <person name="Bajic V.B."/>
            <person name="Brenner S.E."/>
            <person name="Batalov S."/>
            <person name="Forrest A.R."/>
            <person name="Zavolan M."/>
            <person name="Davis M.J."/>
            <person name="Wilming L.G."/>
            <person name="Aidinis V."/>
            <person name="Allen J.E."/>
            <person name="Ambesi-Impiombato A."/>
            <person name="Apweiler R."/>
            <person name="Aturaliya R.N."/>
            <person name="Bailey T.L."/>
            <person name="Bansal M."/>
            <person name="Baxter L."/>
            <person name="Beisel K.W."/>
            <person name="Bersano T."/>
            <person name="Bono H."/>
            <person name="Chalk A.M."/>
            <person name="Chiu K.P."/>
            <person name="Choudhary V."/>
            <person name="Christoffels A."/>
            <person name="Clutterbuck D.R."/>
            <person name="Crowe M.L."/>
            <person name="Dalla E."/>
            <person name="Dalrymple B.P."/>
            <person name="de Bono B."/>
            <person name="Della Gatta G."/>
            <person name="di Bernardo D."/>
            <person name="Down T."/>
            <person name="Engstrom P."/>
            <person name="Fagiolini M."/>
            <person name="Faulkner G."/>
            <person name="Fletcher C.F."/>
            <person name="Fukushima T."/>
            <person name="Furuno M."/>
            <person name="Futaki S."/>
            <person name="Gariboldi M."/>
            <person name="Georgii-Hemming P."/>
            <person name="Gingeras T.R."/>
            <person name="Gojobori T."/>
            <person name="Green R.E."/>
            <person name="Gustincich S."/>
            <person name="Harbers M."/>
            <person name="Hayashi Y."/>
            <person name="Hensch T.K."/>
            <person name="Hirokawa N."/>
            <person name="Hill D."/>
            <person name="Huminiecki L."/>
            <person name="Iacono M."/>
            <person name="Ikeo K."/>
            <person name="Iwama A."/>
            <person name="Ishikawa T."/>
            <person name="Jakt M."/>
            <person name="Kanapin A."/>
            <person name="Katoh M."/>
            <person name="Kawasawa Y."/>
            <person name="Kelso J."/>
            <person name="Kitamura H."/>
            <person name="Kitano H."/>
            <person name="Kollias G."/>
            <person name="Krishnan S.P."/>
            <person name="Kruger A."/>
            <person name="Kummerfeld S.K."/>
            <person name="Kurochkin I.V."/>
            <person name="Lareau L.F."/>
            <person name="Lazarevic D."/>
            <person name="Lipovich L."/>
            <person name="Liu J."/>
            <person name="Liuni S."/>
            <person name="McWilliam S."/>
            <person name="Madan Babu M."/>
            <person name="Madera M."/>
            <person name="Marchionni L."/>
            <person name="Matsuda H."/>
            <person name="Matsuzawa S."/>
            <person name="Miki H."/>
            <person name="Mignone F."/>
            <person name="Miyake S."/>
            <person name="Morris K."/>
            <person name="Mottagui-Tabar S."/>
            <person name="Mulder N."/>
            <person name="Nakano N."/>
            <person name="Nakauchi H."/>
            <person name="Ng P."/>
            <person name="Nilsson R."/>
            <person name="Nishiguchi S."/>
            <person name="Nishikawa S."/>
            <person name="Nori F."/>
            <person name="Ohara O."/>
            <person name="Okazaki Y."/>
            <person name="Orlando V."/>
            <person name="Pang K.C."/>
            <person name="Pavan W.J."/>
            <person name="Pavesi G."/>
            <person name="Pesole G."/>
            <person name="Petrovsky N."/>
            <person name="Piazza S."/>
            <person name="Reed J."/>
            <person name="Reid J.F."/>
            <person name="Ring B.Z."/>
            <person name="Ringwald M."/>
            <person name="Rost B."/>
            <person name="Ruan Y."/>
            <person name="Salzberg S.L."/>
            <person name="Sandelin A."/>
            <person name="Schneider C."/>
            <person name="Schoenbach C."/>
            <person name="Sekiguchi K."/>
            <person name="Semple C.A."/>
            <person name="Seno S."/>
            <person name="Sessa L."/>
            <person name="Sheng Y."/>
            <person name="Shibata Y."/>
            <person name="Shimada H."/>
            <person name="Shimada K."/>
            <person name="Silva D."/>
            <person name="Sinclair B."/>
            <person name="Sperling S."/>
            <person name="Stupka E."/>
            <person name="Sugiura K."/>
            <person name="Sultana R."/>
            <person name="Takenaka Y."/>
            <person name="Taki K."/>
            <person name="Tammoja K."/>
            <person name="Tan S.L."/>
            <person name="Tang S."/>
            <person name="Taylor M.S."/>
            <person name="Tegner J."/>
            <person name="Teichmann S.A."/>
            <person name="Ueda H.R."/>
            <person name="van Nimwegen E."/>
            <person name="Verardo R."/>
            <person name="Wei C.L."/>
            <person name="Yagi K."/>
            <person name="Yamanishi H."/>
            <person name="Zabarovsky E."/>
            <person name="Zhu S."/>
            <person name="Zimmer A."/>
            <person name="Hide W."/>
            <person name="Bult C."/>
            <person name="Grimmond S.M."/>
            <person name="Teasdale R.D."/>
            <person name="Liu E.T."/>
            <person name="Brusic V."/>
            <person name="Quackenbush J."/>
            <person name="Wahlestedt C."/>
            <person name="Mattick J.S."/>
            <person name="Hume D.A."/>
            <person name="Kai C."/>
            <person name="Sasaki D."/>
            <person name="Tomaru Y."/>
            <person name="Fukuda S."/>
            <person name="Kanamori-Katayama M."/>
            <person name="Suzuki M."/>
            <person name="Aoki J."/>
            <person name="Arakawa T."/>
            <person name="Iida J."/>
            <person name="Imamura K."/>
            <person name="Itoh M."/>
            <person name="Kato T."/>
            <person name="Kawaji H."/>
            <person name="Kawagashira N."/>
            <person name="Kawashima T."/>
            <person name="Kojima M."/>
            <person name="Kondo S."/>
            <person name="Konno H."/>
            <person name="Nakano K."/>
            <person name="Ninomiya N."/>
            <person name="Nishio T."/>
            <person name="Okada M."/>
            <person name="Plessy C."/>
            <person name="Shibata K."/>
            <person name="Shiraki T."/>
            <person name="Suzuki S."/>
            <person name="Tagami M."/>
            <person name="Waki K."/>
            <person name="Watahiki A."/>
            <person name="Okamura-Oho Y."/>
            <person name="Suzuki H."/>
            <person name="Kawai J."/>
            <person name="Hayashizaki Y."/>
        </authorList>
    </citation>
    <scope>NUCLEOTIDE SEQUENCE [LARGE SCALE MRNA]</scope>
    <source>
        <strain>C57BL/6J</strain>
        <tissue>Thymus</tissue>
    </source>
</reference>
<reference key="2">
    <citation type="journal article" date="2009" name="PLoS Biol.">
        <title>Lineage-specific biology revealed by a finished genome assembly of the mouse.</title>
        <authorList>
            <person name="Church D.M."/>
            <person name="Goodstadt L."/>
            <person name="Hillier L.W."/>
            <person name="Zody M.C."/>
            <person name="Goldstein S."/>
            <person name="She X."/>
            <person name="Bult C.J."/>
            <person name="Agarwala R."/>
            <person name="Cherry J.L."/>
            <person name="DiCuccio M."/>
            <person name="Hlavina W."/>
            <person name="Kapustin Y."/>
            <person name="Meric P."/>
            <person name="Maglott D."/>
            <person name="Birtle Z."/>
            <person name="Marques A.C."/>
            <person name="Graves T."/>
            <person name="Zhou S."/>
            <person name="Teague B."/>
            <person name="Potamousis K."/>
            <person name="Churas C."/>
            <person name="Place M."/>
            <person name="Herschleb J."/>
            <person name="Runnheim R."/>
            <person name="Forrest D."/>
            <person name="Amos-Landgraf J."/>
            <person name="Schwartz D.C."/>
            <person name="Cheng Z."/>
            <person name="Lindblad-Toh K."/>
            <person name="Eichler E.E."/>
            <person name="Ponting C.P."/>
        </authorList>
    </citation>
    <scope>NUCLEOTIDE SEQUENCE [LARGE SCALE GENOMIC DNA]</scope>
    <source>
        <strain>C57BL/6J</strain>
    </source>
</reference>
<reference key="3">
    <citation type="journal article" date="2005" name="Mol. Cell. Biol.">
        <title>IRIP, a new ischemia/reperfusion-inducible protein that participates in the regulation of transporter activity.</title>
        <authorList>
            <person name="Jiang W."/>
            <person name="Prokopenko O."/>
            <person name="Wong L."/>
            <person name="Inouye M."/>
            <person name="Mirochnitchenko O."/>
        </authorList>
    </citation>
    <scope>NUCLEOTIDE SEQUENCE [MRNA] OF 4-280</scope>
    <scope>FUNCTION</scope>
    <scope>SUBCELLULAR LOCATION</scope>
    <scope>TISSUE SPECIFICITY</scope>
    <scope>INDUCTION</scope>
    <scope>INTERACTION WITH RSC1A1</scope>
    <source>
        <strain>C57BL/6 X CBA</strain>
        <tissue>Kidney</tissue>
    </source>
</reference>
<reference key="4">
    <citation type="journal article" date="2004" name="Genome Res.">
        <title>The status, quality, and expansion of the NIH full-length cDNA project: the Mammalian Gene Collection (MGC).</title>
        <authorList>
            <consortium name="The MGC Project Team"/>
        </authorList>
    </citation>
    <scope>NUCLEOTIDE SEQUENCE [LARGE SCALE MRNA] OF 4-280</scope>
    <source>
        <strain>FVB/N</strain>
        <tissue>Mammary tumor</tissue>
    </source>
</reference>
<reference key="5">
    <citation type="journal article" date="2010" name="Cell">
        <title>A tissue-specific atlas of mouse protein phosphorylation and expression.</title>
        <authorList>
            <person name="Huttlin E.L."/>
            <person name="Jedrychowski M.P."/>
            <person name="Elias J.E."/>
            <person name="Goswami T."/>
            <person name="Rad R."/>
            <person name="Beausoleil S.A."/>
            <person name="Villen J."/>
            <person name="Haas W."/>
            <person name="Sowa M.E."/>
            <person name="Gygi S.P."/>
        </authorList>
    </citation>
    <scope>IDENTIFICATION BY MASS SPECTROMETRY [LARGE SCALE ANALYSIS]</scope>
    <source>
        <tissue>Brain</tissue>
        <tissue>Brown adipose tissue</tissue>
        <tissue>Heart</tissue>
        <tissue>Pancreas</tissue>
        <tissue>Spleen</tissue>
        <tissue>Testis</tissue>
    </source>
</reference>
<reference key="6">
    <citation type="journal article" date="2014" name="Mol. Cell. Proteomics">
        <title>Immunoaffinity enrichment and mass spectrometry analysis of protein methylation.</title>
        <authorList>
            <person name="Guo A."/>
            <person name="Gu H."/>
            <person name="Zhou J."/>
            <person name="Mulhern D."/>
            <person name="Wang Y."/>
            <person name="Lee K.A."/>
            <person name="Yang V."/>
            <person name="Aguiar M."/>
            <person name="Kornhauser J."/>
            <person name="Jia X."/>
            <person name="Ren J."/>
            <person name="Beausoleil S.A."/>
            <person name="Silva J.C."/>
            <person name="Vemulapalli V."/>
            <person name="Bedford M.T."/>
            <person name="Comb M.J."/>
        </authorList>
    </citation>
    <scope>IDENTIFICATION BY MASS SPECTROMETRY [LARGE SCALE ANALYSIS]</scope>
    <source>
        <tissue>Brain</tissue>
        <tissue>Embryo</tissue>
    </source>
</reference>
<accession>Q3U5F4</accession>
<accession>B1ARW9</accession>
<accession>B1ARX2</accession>
<accession>Q7TSY0</accession>
<accession>Q8CII1</accession>